<organism>
    <name type="scientific">Bordetella pertussis (strain Tohama I / ATCC BAA-589 / NCTC 13251)</name>
    <dbReference type="NCBI Taxonomy" id="257313"/>
    <lineage>
        <taxon>Bacteria</taxon>
        <taxon>Pseudomonadati</taxon>
        <taxon>Pseudomonadota</taxon>
        <taxon>Betaproteobacteria</taxon>
        <taxon>Burkholderiales</taxon>
        <taxon>Alcaligenaceae</taxon>
        <taxon>Bordetella</taxon>
    </lineage>
</organism>
<reference key="1">
    <citation type="submission" date="1999-04" db="EMBL/GenBank/DDBJ databases">
        <authorList>
            <person name="Pradel E."/>
        </authorList>
    </citation>
    <scope>NUCLEOTIDE SEQUENCE [GENOMIC DNA]</scope>
    <source>
        <strain>Tohama I / ATCC BAA-589 / NCTC 13251</strain>
    </source>
</reference>
<reference key="2">
    <citation type="journal article" date="2003" name="Nat. Genet.">
        <title>Comparative analysis of the genome sequences of Bordetella pertussis, Bordetella parapertussis and Bordetella bronchiseptica.</title>
        <authorList>
            <person name="Parkhill J."/>
            <person name="Sebaihia M."/>
            <person name="Preston A."/>
            <person name="Murphy L.D."/>
            <person name="Thomson N.R."/>
            <person name="Harris D.E."/>
            <person name="Holden M.T.G."/>
            <person name="Churcher C.M."/>
            <person name="Bentley S.D."/>
            <person name="Mungall K.L."/>
            <person name="Cerdeno-Tarraga A.-M."/>
            <person name="Temple L."/>
            <person name="James K.D."/>
            <person name="Harris B."/>
            <person name="Quail M.A."/>
            <person name="Achtman M."/>
            <person name="Atkin R."/>
            <person name="Baker S."/>
            <person name="Basham D."/>
            <person name="Bason N."/>
            <person name="Cherevach I."/>
            <person name="Chillingworth T."/>
            <person name="Collins M."/>
            <person name="Cronin A."/>
            <person name="Davis P."/>
            <person name="Doggett J."/>
            <person name="Feltwell T."/>
            <person name="Goble A."/>
            <person name="Hamlin N."/>
            <person name="Hauser H."/>
            <person name="Holroyd S."/>
            <person name="Jagels K."/>
            <person name="Leather S."/>
            <person name="Moule S."/>
            <person name="Norberczak H."/>
            <person name="O'Neil S."/>
            <person name="Ormond D."/>
            <person name="Price C."/>
            <person name="Rabbinowitsch E."/>
            <person name="Rutter S."/>
            <person name="Sanders M."/>
            <person name="Saunders D."/>
            <person name="Seeger K."/>
            <person name="Sharp S."/>
            <person name="Simmonds M."/>
            <person name="Skelton J."/>
            <person name="Squares R."/>
            <person name="Squares S."/>
            <person name="Stevens K."/>
            <person name="Unwin L."/>
            <person name="Whitehead S."/>
            <person name="Barrell B.G."/>
            <person name="Maskell D.J."/>
        </authorList>
    </citation>
    <scope>NUCLEOTIDE SEQUENCE [LARGE SCALE GENOMIC DNA]</scope>
    <source>
        <strain>Tohama I / ATCC BAA-589 / NCTC 13251</strain>
    </source>
</reference>
<accession>Q9X6Y9</accession>
<name>DAPB_BORPE</name>
<comment type="function">
    <text evidence="1">Catalyzes the conversion of 4-hydroxy-tetrahydrodipicolinate (HTPA) to tetrahydrodipicolinate.</text>
</comment>
<comment type="catalytic activity">
    <reaction evidence="1">
        <text>(S)-2,3,4,5-tetrahydrodipicolinate + NAD(+) + H2O = (2S,4S)-4-hydroxy-2,3,4,5-tetrahydrodipicolinate + NADH + H(+)</text>
        <dbReference type="Rhea" id="RHEA:35323"/>
        <dbReference type="ChEBI" id="CHEBI:15377"/>
        <dbReference type="ChEBI" id="CHEBI:15378"/>
        <dbReference type="ChEBI" id="CHEBI:16845"/>
        <dbReference type="ChEBI" id="CHEBI:57540"/>
        <dbReference type="ChEBI" id="CHEBI:57945"/>
        <dbReference type="ChEBI" id="CHEBI:67139"/>
        <dbReference type="EC" id="1.17.1.8"/>
    </reaction>
</comment>
<comment type="catalytic activity">
    <reaction evidence="1">
        <text>(S)-2,3,4,5-tetrahydrodipicolinate + NADP(+) + H2O = (2S,4S)-4-hydroxy-2,3,4,5-tetrahydrodipicolinate + NADPH + H(+)</text>
        <dbReference type="Rhea" id="RHEA:35331"/>
        <dbReference type="ChEBI" id="CHEBI:15377"/>
        <dbReference type="ChEBI" id="CHEBI:15378"/>
        <dbReference type="ChEBI" id="CHEBI:16845"/>
        <dbReference type="ChEBI" id="CHEBI:57783"/>
        <dbReference type="ChEBI" id="CHEBI:58349"/>
        <dbReference type="ChEBI" id="CHEBI:67139"/>
        <dbReference type="EC" id="1.17.1.8"/>
    </reaction>
</comment>
<comment type="pathway">
    <text evidence="1">Amino-acid biosynthesis; L-lysine biosynthesis via DAP pathway; (S)-tetrahydrodipicolinate from L-aspartate: step 4/4.</text>
</comment>
<comment type="subcellular location">
    <subcellularLocation>
        <location evidence="1">Cytoplasm</location>
    </subcellularLocation>
</comment>
<comment type="similarity">
    <text evidence="1">Belongs to the DapB family.</text>
</comment>
<comment type="caution">
    <text evidence="2">Was originally thought to be a dihydrodipicolinate reductase (DHDPR), catalyzing the conversion of dihydrodipicolinate to tetrahydrodipicolinate. However, it was shown in E.coli that the substrate of the enzymatic reaction is not dihydrodipicolinate (DHDP) but in fact (2S,4S)-4-hydroxy-2,3,4,5-tetrahydrodipicolinic acid (HTPA), the product released by the DapA-catalyzed reaction.</text>
</comment>
<dbReference type="EC" id="1.17.1.8" evidence="1"/>
<dbReference type="EMBL" id="AJ238308">
    <property type="protein sequence ID" value="CAB41012.1"/>
    <property type="molecule type" value="Genomic_DNA"/>
</dbReference>
<dbReference type="EMBL" id="BX640418">
    <property type="protein sequence ID" value="CAE42781.1"/>
    <property type="molecule type" value="Genomic_DNA"/>
</dbReference>
<dbReference type="RefSeq" id="NP_881136.1">
    <property type="nucleotide sequence ID" value="NC_002929.2"/>
</dbReference>
<dbReference type="RefSeq" id="WP_010930964.1">
    <property type="nucleotide sequence ID" value="NZ_CP039022.1"/>
</dbReference>
<dbReference type="SMR" id="Q9X6Y9"/>
<dbReference type="STRING" id="257313.BP2509"/>
<dbReference type="PaxDb" id="257313-BP2509"/>
<dbReference type="GeneID" id="69602410"/>
<dbReference type="KEGG" id="bpe:BP2509"/>
<dbReference type="PATRIC" id="fig|257313.5.peg.2707"/>
<dbReference type="eggNOG" id="COG0289">
    <property type="taxonomic scope" value="Bacteria"/>
</dbReference>
<dbReference type="HOGENOM" id="CLU_047479_2_1_4"/>
<dbReference type="UniPathway" id="UPA00034">
    <property type="reaction ID" value="UER00018"/>
</dbReference>
<dbReference type="Proteomes" id="UP000002676">
    <property type="component" value="Chromosome"/>
</dbReference>
<dbReference type="GO" id="GO:0005829">
    <property type="term" value="C:cytosol"/>
    <property type="evidence" value="ECO:0007669"/>
    <property type="project" value="TreeGrafter"/>
</dbReference>
<dbReference type="GO" id="GO:0008839">
    <property type="term" value="F:4-hydroxy-tetrahydrodipicolinate reductase"/>
    <property type="evidence" value="ECO:0007669"/>
    <property type="project" value="UniProtKB-EC"/>
</dbReference>
<dbReference type="GO" id="GO:0051287">
    <property type="term" value="F:NAD binding"/>
    <property type="evidence" value="ECO:0007669"/>
    <property type="project" value="UniProtKB-UniRule"/>
</dbReference>
<dbReference type="GO" id="GO:0050661">
    <property type="term" value="F:NADP binding"/>
    <property type="evidence" value="ECO:0007669"/>
    <property type="project" value="UniProtKB-UniRule"/>
</dbReference>
<dbReference type="GO" id="GO:0016726">
    <property type="term" value="F:oxidoreductase activity, acting on CH or CH2 groups, NAD or NADP as acceptor"/>
    <property type="evidence" value="ECO:0007669"/>
    <property type="project" value="UniProtKB-UniRule"/>
</dbReference>
<dbReference type="GO" id="GO:0019877">
    <property type="term" value="P:diaminopimelate biosynthetic process"/>
    <property type="evidence" value="ECO:0007669"/>
    <property type="project" value="UniProtKB-UniRule"/>
</dbReference>
<dbReference type="GO" id="GO:0009089">
    <property type="term" value="P:lysine biosynthetic process via diaminopimelate"/>
    <property type="evidence" value="ECO:0007669"/>
    <property type="project" value="UniProtKB-UniRule"/>
</dbReference>
<dbReference type="CDD" id="cd02274">
    <property type="entry name" value="DHDPR_N"/>
    <property type="match status" value="1"/>
</dbReference>
<dbReference type="FunFam" id="3.30.360.10:FF:000004">
    <property type="entry name" value="4-hydroxy-tetrahydrodipicolinate reductase"/>
    <property type="match status" value="1"/>
</dbReference>
<dbReference type="FunFam" id="3.40.50.720:FF:000048">
    <property type="entry name" value="4-hydroxy-tetrahydrodipicolinate reductase"/>
    <property type="match status" value="1"/>
</dbReference>
<dbReference type="Gene3D" id="3.30.360.10">
    <property type="entry name" value="Dihydrodipicolinate Reductase, domain 2"/>
    <property type="match status" value="1"/>
</dbReference>
<dbReference type="Gene3D" id="3.40.50.720">
    <property type="entry name" value="NAD(P)-binding Rossmann-like Domain"/>
    <property type="match status" value="1"/>
</dbReference>
<dbReference type="HAMAP" id="MF_00102">
    <property type="entry name" value="DapB"/>
    <property type="match status" value="1"/>
</dbReference>
<dbReference type="InterPro" id="IPR022663">
    <property type="entry name" value="DapB_C"/>
</dbReference>
<dbReference type="InterPro" id="IPR000846">
    <property type="entry name" value="DapB_N"/>
</dbReference>
<dbReference type="InterPro" id="IPR022664">
    <property type="entry name" value="DapB_N_CS"/>
</dbReference>
<dbReference type="InterPro" id="IPR023940">
    <property type="entry name" value="DHDPR_bac"/>
</dbReference>
<dbReference type="InterPro" id="IPR036291">
    <property type="entry name" value="NAD(P)-bd_dom_sf"/>
</dbReference>
<dbReference type="NCBIfam" id="TIGR00036">
    <property type="entry name" value="dapB"/>
    <property type="match status" value="1"/>
</dbReference>
<dbReference type="PANTHER" id="PTHR20836:SF0">
    <property type="entry name" value="4-HYDROXY-TETRAHYDRODIPICOLINATE REDUCTASE 1, CHLOROPLASTIC-RELATED"/>
    <property type="match status" value="1"/>
</dbReference>
<dbReference type="PANTHER" id="PTHR20836">
    <property type="entry name" value="DIHYDRODIPICOLINATE REDUCTASE"/>
    <property type="match status" value="1"/>
</dbReference>
<dbReference type="Pfam" id="PF05173">
    <property type="entry name" value="DapB_C"/>
    <property type="match status" value="1"/>
</dbReference>
<dbReference type="Pfam" id="PF01113">
    <property type="entry name" value="DapB_N"/>
    <property type="match status" value="1"/>
</dbReference>
<dbReference type="PIRSF" id="PIRSF000161">
    <property type="entry name" value="DHPR"/>
    <property type="match status" value="1"/>
</dbReference>
<dbReference type="SUPFAM" id="SSF55347">
    <property type="entry name" value="Glyceraldehyde-3-phosphate dehydrogenase-like, C-terminal domain"/>
    <property type="match status" value="1"/>
</dbReference>
<dbReference type="SUPFAM" id="SSF51735">
    <property type="entry name" value="NAD(P)-binding Rossmann-fold domains"/>
    <property type="match status" value="1"/>
</dbReference>
<dbReference type="PROSITE" id="PS01298">
    <property type="entry name" value="DAPB"/>
    <property type="match status" value="1"/>
</dbReference>
<sequence>MTQATPQRIAIAGASGRMGQMLIEAVLDTEGVELAVALDRAGSPSIGQDAGAALGRPCGVTITDQLDALAQADCLIDFTRPEGTLQHLQACLRHDVKMVIGTTGFDSSGRAEIKVAAQKIAIVFAPNMSVGVNATLKLLDMAARILNSGYDVEIFEAHHRNKVDAPSGTALIMGETVASAWDVALPDVATWTRHGDTGVRKPGTIGFSVVRGGDIVGDHTVFFCGTGERIEISHRSSSRATYAQGAVRAARFLARQDNGLYDMQAVLGL</sequence>
<keyword id="KW-0028">Amino-acid biosynthesis</keyword>
<keyword id="KW-0963">Cytoplasm</keyword>
<keyword id="KW-0220">Diaminopimelate biosynthesis</keyword>
<keyword id="KW-0457">Lysine biosynthesis</keyword>
<keyword id="KW-0520">NAD</keyword>
<keyword id="KW-0521">NADP</keyword>
<keyword id="KW-0560">Oxidoreductase</keyword>
<keyword id="KW-1185">Reference proteome</keyword>
<evidence type="ECO:0000255" key="1">
    <source>
        <dbReference type="HAMAP-Rule" id="MF_00102"/>
    </source>
</evidence>
<evidence type="ECO:0000305" key="2"/>
<protein>
    <recommendedName>
        <fullName evidence="1">4-hydroxy-tetrahydrodipicolinate reductase</fullName>
        <shortName evidence="1">HTPA reductase</shortName>
        <ecNumber evidence="1">1.17.1.8</ecNumber>
    </recommendedName>
</protein>
<feature type="chain" id="PRO_0000141415" description="4-hydroxy-tetrahydrodipicolinate reductase">
    <location>
        <begin position="1"/>
        <end position="269"/>
    </location>
</feature>
<feature type="active site" description="Proton donor/acceptor" evidence="1">
    <location>
        <position position="158"/>
    </location>
</feature>
<feature type="active site" description="Proton donor" evidence="1">
    <location>
        <position position="162"/>
    </location>
</feature>
<feature type="binding site" evidence="1">
    <location>
        <begin position="13"/>
        <end position="18"/>
    </location>
    <ligand>
        <name>NAD(+)</name>
        <dbReference type="ChEBI" id="CHEBI:57540"/>
    </ligand>
</feature>
<feature type="binding site" evidence="1">
    <location>
        <position position="39"/>
    </location>
    <ligand>
        <name>NAD(+)</name>
        <dbReference type="ChEBI" id="CHEBI:57540"/>
    </ligand>
</feature>
<feature type="binding site" evidence="1">
    <location>
        <position position="40"/>
    </location>
    <ligand>
        <name>NADP(+)</name>
        <dbReference type="ChEBI" id="CHEBI:58349"/>
    </ligand>
</feature>
<feature type="binding site" evidence="1">
    <location>
        <begin position="101"/>
        <end position="103"/>
    </location>
    <ligand>
        <name>NAD(+)</name>
        <dbReference type="ChEBI" id="CHEBI:57540"/>
    </ligand>
</feature>
<feature type="binding site" evidence="1">
    <location>
        <begin position="125"/>
        <end position="128"/>
    </location>
    <ligand>
        <name>NAD(+)</name>
        <dbReference type="ChEBI" id="CHEBI:57540"/>
    </ligand>
</feature>
<feature type="binding site" evidence="1">
    <location>
        <position position="159"/>
    </location>
    <ligand>
        <name>(S)-2,3,4,5-tetrahydrodipicolinate</name>
        <dbReference type="ChEBI" id="CHEBI:16845"/>
    </ligand>
</feature>
<feature type="binding site" evidence="1">
    <location>
        <begin position="168"/>
        <end position="169"/>
    </location>
    <ligand>
        <name>(S)-2,3,4,5-tetrahydrodipicolinate</name>
        <dbReference type="ChEBI" id="CHEBI:16845"/>
    </ligand>
</feature>
<gene>
    <name evidence="1" type="primary">dapB</name>
    <name type="ordered locus">BP2509</name>
</gene>
<proteinExistence type="inferred from homology"/>